<evidence type="ECO:0000250" key="1"/>
<evidence type="ECO:0000250" key="2">
    <source>
        <dbReference type="UniProtKB" id="P00515"/>
    </source>
</evidence>
<evidence type="ECO:0000256" key="3">
    <source>
        <dbReference type="SAM" id="MobiDB-lite"/>
    </source>
</evidence>
<evidence type="ECO:0000269" key="4">
    <source>
    </source>
</evidence>
<evidence type="ECO:0000269" key="5">
    <source>
    </source>
</evidence>
<evidence type="ECO:0000269" key="6">
    <source>
    </source>
</evidence>
<evidence type="ECO:0000303" key="7">
    <source>
    </source>
</evidence>
<evidence type="ECO:0000303" key="8">
    <source ref="2"/>
</evidence>
<evidence type="ECO:0000305" key="9"/>
<evidence type="ECO:0007744" key="10">
    <source>
    </source>
</evidence>
<evidence type="ECO:0007744" key="11">
    <source>
    </source>
</evidence>
<evidence type="ECO:0007744" key="12">
    <source>
    </source>
</evidence>
<evidence type="ECO:0007744" key="13">
    <source>
    </source>
</evidence>
<evidence type="ECO:0007744" key="14">
    <source>
    </source>
</evidence>
<evidence type="ECO:0007744" key="15">
    <source>
    </source>
</evidence>
<evidence type="ECO:0007744" key="16">
    <source>
    </source>
</evidence>
<evidence type="ECO:0007744" key="17">
    <source>
    </source>
</evidence>
<evidence type="ECO:0007744" key="18">
    <source>
    </source>
</evidence>
<evidence type="ECO:0007744" key="19">
    <source>
    </source>
</evidence>
<evidence type="ECO:0007829" key="20">
    <source>
        <dbReference type="PDB" id="2IZX"/>
    </source>
</evidence>
<name>KAP2_HUMAN</name>
<proteinExistence type="evidence at protein level"/>
<reference key="1">
    <citation type="journal article" date="1989" name="FEBS Lett.">
        <title>Human testis cDNA for the regulatory subunit RII alpha of cAMP-dependent protein kinase encodes an alternate amino-terminal region.</title>
        <authorList>
            <person name="Oyen O."/>
            <person name="Myklebust F."/>
            <person name="Scott J.D."/>
            <person name="Hansson V."/>
            <person name="Jahnsen T."/>
        </authorList>
    </citation>
    <scope>NUCLEOTIDE SEQUENCE [MRNA] (ISOFORM 1)</scope>
    <source>
        <tissue>Testis</tissue>
    </source>
</reference>
<reference key="2">
    <citation type="submission" date="2003-05" db="EMBL/GenBank/DDBJ databases">
        <title>Cloning of human full-length CDSs in BD Creator(TM) system donor vector.</title>
        <authorList>
            <person name="Kalnine N."/>
            <person name="Chen X."/>
            <person name="Rolfs A."/>
            <person name="Halleck A."/>
            <person name="Hines L."/>
            <person name="Eisenstein S."/>
            <person name="Koundinya M."/>
            <person name="Raphael J."/>
            <person name="Moreira D."/>
            <person name="Kelley T."/>
            <person name="LaBaer J."/>
            <person name="Lin Y."/>
            <person name="Phelan M."/>
            <person name="Farmer A."/>
        </authorList>
    </citation>
    <scope>NUCLEOTIDE SEQUENCE [LARGE SCALE MRNA] (ISOFORM 2)</scope>
</reference>
<reference key="3">
    <citation type="journal article" date="2006" name="Nature">
        <title>The DNA sequence, annotation and analysis of human chromosome 3.</title>
        <authorList>
            <person name="Muzny D.M."/>
            <person name="Scherer S.E."/>
            <person name="Kaul R."/>
            <person name="Wang J."/>
            <person name="Yu J."/>
            <person name="Sudbrak R."/>
            <person name="Buhay C.J."/>
            <person name="Chen R."/>
            <person name="Cree A."/>
            <person name="Ding Y."/>
            <person name="Dugan-Rocha S."/>
            <person name="Gill R."/>
            <person name="Gunaratne P."/>
            <person name="Harris R.A."/>
            <person name="Hawes A.C."/>
            <person name="Hernandez J."/>
            <person name="Hodgson A.V."/>
            <person name="Hume J."/>
            <person name="Jackson A."/>
            <person name="Khan Z.M."/>
            <person name="Kovar-Smith C."/>
            <person name="Lewis L.R."/>
            <person name="Lozado R.J."/>
            <person name="Metzker M.L."/>
            <person name="Milosavljevic A."/>
            <person name="Miner G.R."/>
            <person name="Morgan M.B."/>
            <person name="Nazareth L.V."/>
            <person name="Scott G."/>
            <person name="Sodergren E."/>
            <person name="Song X.-Z."/>
            <person name="Steffen D."/>
            <person name="Wei S."/>
            <person name="Wheeler D.A."/>
            <person name="Wright M.W."/>
            <person name="Worley K.C."/>
            <person name="Yuan Y."/>
            <person name="Zhang Z."/>
            <person name="Adams C.Q."/>
            <person name="Ansari-Lari M.A."/>
            <person name="Ayele M."/>
            <person name="Brown M.J."/>
            <person name="Chen G."/>
            <person name="Chen Z."/>
            <person name="Clendenning J."/>
            <person name="Clerc-Blankenburg K.P."/>
            <person name="Chen R."/>
            <person name="Chen Z."/>
            <person name="Davis C."/>
            <person name="Delgado O."/>
            <person name="Dinh H.H."/>
            <person name="Dong W."/>
            <person name="Draper H."/>
            <person name="Ernst S."/>
            <person name="Fu G."/>
            <person name="Gonzalez-Garay M.L."/>
            <person name="Garcia D.K."/>
            <person name="Gillett W."/>
            <person name="Gu J."/>
            <person name="Hao B."/>
            <person name="Haugen E."/>
            <person name="Havlak P."/>
            <person name="He X."/>
            <person name="Hennig S."/>
            <person name="Hu S."/>
            <person name="Huang W."/>
            <person name="Jackson L.R."/>
            <person name="Jacob L.S."/>
            <person name="Kelly S.H."/>
            <person name="Kube M."/>
            <person name="Levy R."/>
            <person name="Li Z."/>
            <person name="Liu B."/>
            <person name="Liu J."/>
            <person name="Liu W."/>
            <person name="Lu J."/>
            <person name="Maheshwari M."/>
            <person name="Nguyen B.-V."/>
            <person name="Okwuonu G.O."/>
            <person name="Palmeiri A."/>
            <person name="Pasternak S."/>
            <person name="Perez L.M."/>
            <person name="Phelps K.A."/>
            <person name="Plopper F.J."/>
            <person name="Qiang B."/>
            <person name="Raymond C."/>
            <person name="Rodriguez R."/>
            <person name="Saenphimmachak C."/>
            <person name="Santibanez J."/>
            <person name="Shen H."/>
            <person name="Shen Y."/>
            <person name="Subramanian S."/>
            <person name="Tabor P.E."/>
            <person name="Verduzco D."/>
            <person name="Waldron L."/>
            <person name="Wang J."/>
            <person name="Wang J."/>
            <person name="Wang Q."/>
            <person name="Williams G.A."/>
            <person name="Wong G.K.-S."/>
            <person name="Yao Z."/>
            <person name="Zhang J."/>
            <person name="Zhang X."/>
            <person name="Zhao G."/>
            <person name="Zhou J."/>
            <person name="Zhou Y."/>
            <person name="Nelson D."/>
            <person name="Lehrach H."/>
            <person name="Reinhardt R."/>
            <person name="Naylor S.L."/>
            <person name="Yang H."/>
            <person name="Olson M."/>
            <person name="Weinstock G."/>
            <person name="Gibbs R.A."/>
        </authorList>
    </citation>
    <scope>NUCLEOTIDE SEQUENCE [LARGE SCALE GENOMIC DNA]</scope>
</reference>
<reference key="4">
    <citation type="submission" date="2005-07" db="EMBL/GenBank/DDBJ databases">
        <authorList>
            <person name="Mural R.J."/>
            <person name="Istrail S."/>
            <person name="Sutton G."/>
            <person name="Florea L."/>
            <person name="Halpern A.L."/>
            <person name="Mobarry C.M."/>
            <person name="Lippert R."/>
            <person name="Walenz B."/>
            <person name="Shatkay H."/>
            <person name="Dew I."/>
            <person name="Miller J.R."/>
            <person name="Flanigan M.J."/>
            <person name="Edwards N.J."/>
            <person name="Bolanos R."/>
            <person name="Fasulo D."/>
            <person name="Halldorsson B.V."/>
            <person name="Hannenhalli S."/>
            <person name="Turner R."/>
            <person name="Yooseph S."/>
            <person name="Lu F."/>
            <person name="Nusskern D.R."/>
            <person name="Shue B.C."/>
            <person name="Zheng X.H."/>
            <person name="Zhong F."/>
            <person name="Delcher A.L."/>
            <person name="Huson D.H."/>
            <person name="Kravitz S.A."/>
            <person name="Mouchard L."/>
            <person name="Reinert K."/>
            <person name="Remington K.A."/>
            <person name="Clark A.G."/>
            <person name="Waterman M.S."/>
            <person name="Eichler E.E."/>
            <person name="Adams M.D."/>
            <person name="Hunkapiller M.W."/>
            <person name="Myers E.W."/>
            <person name="Venter J.C."/>
        </authorList>
    </citation>
    <scope>NUCLEOTIDE SEQUENCE [LARGE SCALE GENOMIC DNA]</scope>
</reference>
<reference key="5">
    <citation type="journal article" date="2004" name="Genome Res.">
        <title>The status, quality, and expansion of the NIH full-length cDNA project: the Mammalian Gene Collection (MGC).</title>
        <authorList>
            <consortium name="The MGC Project Team"/>
        </authorList>
    </citation>
    <scope>NUCLEOTIDE SEQUENCE [LARGE SCALE MRNA] (ISOFORM 2)</scope>
    <source>
        <tissue>Placenta</tissue>
    </source>
</reference>
<reference key="6">
    <citation type="journal article" date="1997" name="Biochim. Biophys. Acta">
        <title>Molecular cloning, upstream sequence and promoter studies of the human gene for the regulatory subunit RII alpha of cAMP-dependent protein kinase.</title>
        <authorList>
            <person name="Foss K.B."/>
            <person name="Solberg R."/>
            <person name="Simard J."/>
            <person name="Myklebust F."/>
            <person name="Hansson V."/>
            <person name="Jahnsen T."/>
            <person name="Tasken K."/>
        </authorList>
    </citation>
    <scope>NUCLEOTIDE SEQUENCE [GENOMIC DNA] OF 1-87</scope>
</reference>
<reference key="7">
    <citation type="journal article" date="2002" name="J. Immunol.">
        <title>Identification and characterization of myeloid translocation gene 16b as a novel a kinase anchoring protein in T lymphocytes.</title>
        <authorList>
            <person name="Schillace R.V."/>
            <person name="Andrews S.F."/>
            <person name="Liberty G.A."/>
            <person name="Davey M.P."/>
            <person name="Carr D.W."/>
        </authorList>
    </citation>
    <scope>INTERACTION WITH CBFA2T3</scope>
</reference>
<reference key="8">
    <citation type="journal article" date="2003" name="Nature">
        <title>Proteomic characterization of the human centrosome by protein correlation profiling.</title>
        <authorList>
            <person name="Andersen J.S."/>
            <person name="Wilkinson C.J."/>
            <person name="Mayor T."/>
            <person name="Mortensen P."/>
            <person name="Nigg E.A."/>
            <person name="Mann M."/>
        </authorList>
    </citation>
    <scope>IDENTIFICATION BY MASS SPECTROMETRY</scope>
    <source>
        <tissue>Lymphoblast</tissue>
    </source>
</reference>
<reference key="9">
    <citation type="journal article" date="2006" name="Cell">
        <title>Global, in vivo, and site-specific phosphorylation dynamics in signaling networks.</title>
        <authorList>
            <person name="Olsen J.V."/>
            <person name="Blagoev B."/>
            <person name="Gnad F."/>
            <person name="Macek B."/>
            <person name="Kumar C."/>
            <person name="Mortensen P."/>
            <person name="Mann M."/>
        </authorList>
    </citation>
    <scope>PHOSPHORYLATION [LARGE SCALE ANALYSIS] AT SER-99</scope>
    <scope>IDENTIFICATION BY MASS SPECTROMETRY [LARGE SCALE ANALYSIS]</scope>
    <source>
        <tissue>Cervix carcinoma</tissue>
    </source>
</reference>
<reference key="10">
    <citation type="journal article" date="2006" name="Pituitary">
        <title>Phosphoproteomic analysis of the human pituitary.</title>
        <authorList>
            <person name="Beranova-Giorgianni S."/>
            <person name="Zhao Y."/>
            <person name="Desiderio D.M."/>
            <person name="Giorgianni F."/>
        </authorList>
    </citation>
    <scope>IDENTIFICATION BY MASS SPECTROMETRY [LARGE SCALE ANALYSIS]</scope>
    <source>
        <tissue>Pituitary</tissue>
    </source>
</reference>
<reference key="11">
    <citation type="journal article" date="2007" name="Electrophoresis">
        <title>Toward a global characterization of the phosphoproteome in prostate cancer cells: identification of phosphoproteins in the LNCaP cell line.</title>
        <authorList>
            <person name="Giorgianni F."/>
            <person name="Zhao Y."/>
            <person name="Desiderio D.M."/>
            <person name="Beranova-Giorgianni S."/>
        </authorList>
    </citation>
    <scope>IDENTIFICATION BY MASS SPECTROMETRY [LARGE SCALE ANALYSIS]</scope>
    <source>
        <tissue>Prostate cancer</tissue>
    </source>
</reference>
<reference key="12">
    <citation type="journal article" date="2007" name="J. Biol. Chem.">
        <title>MyRIP anchors protein kinase A to the exocyst complex.</title>
        <authorList>
            <person name="Goehring A.S."/>
            <person name="Pedroja B.S."/>
            <person name="Hinke S.A."/>
            <person name="Langeberg L.K."/>
            <person name="Scott J.D."/>
        </authorList>
    </citation>
    <scope>INTERACTION WITH MYRIP</scope>
</reference>
<reference key="13">
    <citation type="journal article" date="2008" name="J. Proteome Res.">
        <title>Phosphoproteome of resting human platelets.</title>
        <authorList>
            <person name="Zahedi R.P."/>
            <person name="Lewandrowski U."/>
            <person name="Wiesner J."/>
            <person name="Wortelkamp S."/>
            <person name="Moebius J."/>
            <person name="Schuetz C."/>
            <person name="Walter U."/>
            <person name="Gambaryan S."/>
            <person name="Sickmann A."/>
        </authorList>
    </citation>
    <scope>IDENTIFICATION BY MASS SPECTROMETRY [LARGE SCALE ANALYSIS]</scope>
    <source>
        <tissue>Platelet</tissue>
    </source>
</reference>
<reference key="14">
    <citation type="journal article" date="2008" name="Mol. Cell">
        <title>Kinase-selective enrichment enables quantitative phosphoproteomics of the kinome across the cell cycle.</title>
        <authorList>
            <person name="Daub H."/>
            <person name="Olsen J.V."/>
            <person name="Bairlein M."/>
            <person name="Gnad F."/>
            <person name="Oppermann F.S."/>
            <person name="Korner R."/>
            <person name="Greff Z."/>
            <person name="Keri G."/>
            <person name="Stemmann O."/>
            <person name="Mann M."/>
        </authorList>
    </citation>
    <scope>IDENTIFICATION BY MASS SPECTROMETRY [LARGE SCALE ANALYSIS]</scope>
    <source>
        <tissue>Cervix carcinoma</tissue>
    </source>
</reference>
<reference key="15">
    <citation type="journal article" date="2008" name="Proc. Natl. Acad. Sci. U.S.A.">
        <title>A quantitative atlas of mitotic phosphorylation.</title>
        <authorList>
            <person name="Dephoure N."/>
            <person name="Zhou C."/>
            <person name="Villen J."/>
            <person name="Beausoleil S.A."/>
            <person name="Bakalarski C.E."/>
            <person name="Elledge S.J."/>
            <person name="Gygi S.P."/>
        </authorList>
    </citation>
    <scope>PHOSPHORYLATION [LARGE SCALE ANALYSIS] AT THR-54; SER-58; SER-78; SER-80 AND SER-99</scope>
    <scope>IDENTIFICATION BY MASS SPECTROMETRY [LARGE SCALE ANALYSIS]</scope>
    <source>
        <tissue>Cervix carcinoma</tissue>
    </source>
</reference>
<reference key="16">
    <citation type="journal article" date="2008" name="Proteomics">
        <title>Large-scale phosphoproteome analysis of human liver tissue by enrichment and fractionation of phosphopeptides with strong anion exchange chromatography.</title>
        <authorList>
            <person name="Han G."/>
            <person name="Ye M."/>
            <person name="Zhou H."/>
            <person name="Jiang X."/>
            <person name="Feng S."/>
            <person name="Jiang X."/>
            <person name="Tian R."/>
            <person name="Wan D."/>
            <person name="Zou H."/>
            <person name="Gu J."/>
        </authorList>
    </citation>
    <scope>PHOSPHORYLATION [LARGE SCALE ANALYSIS] AT SER-99</scope>
    <scope>IDENTIFICATION BY MASS SPECTROMETRY [LARGE SCALE ANALYSIS]</scope>
    <source>
        <tissue>Liver</tissue>
    </source>
</reference>
<reference key="17">
    <citation type="journal article" date="2009" name="Anal. Chem.">
        <title>Lys-N and trypsin cover complementary parts of the phosphoproteome in a refined SCX-based approach.</title>
        <authorList>
            <person name="Gauci S."/>
            <person name="Helbig A.O."/>
            <person name="Slijper M."/>
            <person name="Krijgsveld J."/>
            <person name="Heck A.J."/>
            <person name="Mohammed S."/>
        </authorList>
    </citation>
    <scope>IDENTIFICATION BY MASS SPECTROMETRY [LARGE SCALE ANALYSIS]</scope>
</reference>
<reference key="18">
    <citation type="journal article" date="2009" name="Mol. Cell. Proteomics">
        <title>Large-scale proteomics analysis of the human kinome.</title>
        <authorList>
            <person name="Oppermann F.S."/>
            <person name="Gnad F."/>
            <person name="Olsen J.V."/>
            <person name="Hornberger R."/>
            <person name="Greff Z."/>
            <person name="Keri G."/>
            <person name="Mann M."/>
            <person name="Daub H."/>
        </authorList>
    </citation>
    <scope>IDENTIFICATION BY MASS SPECTROMETRY [LARGE SCALE ANALYSIS]</scope>
</reference>
<reference key="19">
    <citation type="journal article" date="2009" name="Sci. Signal.">
        <title>Quantitative phosphoproteomic analysis of T cell receptor signaling reveals system-wide modulation of protein-protein interactions.</title>
        <authorList>
            <person name="Mayya V."/>
            <person name="Lundgren D.H."/>
            <person name="Hwang S.-I."/>
            <person name="Rezaul K."/>
            <person name="Wu L."/>
            <person name="Eng J.K."/>
            <person name="Rodionov V."/>
            <person name="Han D.K."/>
        </authorList>
    </citation>
    <scope>PHOSPHORYLATION [LARGE SCALE ANALYSIS] AT SER-78; SER-80 AND SER-99</scope>
    <scope>IDENTIFICATION BY MASS SPECTROMETRY [LARGE SCALE ANALYSIS]</scope>
    <source>
        <tissue>Leukemic T-cell</tissue>
    </source>
</reference>
<reference key="20">
    <citation type="journal article" date="2010" name="Sci. Signal.">
        <title>Quantitative phosphoproteomics reveals widespread full phosphorylation site occupancy during mitosis.</title>
        <authorList>
            <person name="Olsen J.V."/>
            <person name="Vermeulen M."/>
            <person name="Santamaria A."/>
            <person name="Kumar C."/>
            <person name="Miller M.L."/>
            <person name="Jensen L.J."/>
            <person name="Gnad F."/>
            <person name="Cox J."/>
            <person name="Jensen T.S."/>
            <person name="Nigg E.A."/>
            <person name="Brunak S."/>
            <person name="Mann M."/>
        </authorList>
    </citation>
    <scope>PHOSPHORYLATION [LARGE SCALE ANALYSIS] AT SER-48; THR-54; SER-58; SER-78 AND SER-80</scope>
    <scope>IDENTIFICATION BY MASS SPECTROMETRY [LARGE SCALE ANALYSIS]</scope>
    <source>
        <tissue>Cervix carcinoma</tissue>
    </source>
</reference>
<reference key="21">
    <citation type="journal article" date="2011" name="BMC Syst. Biol.">
        <title>Initial characterization of the human central proteome.</title>
        <authorList>
            <person name="Burkard T.R."/>
            <person name="Planyavsky M."/>
            <person name="Kaupe I."/>
            <person name="Breitwieser F.P."/>
            <person name="Buerckstuemmer T."/>
            <person name="Bennett K.L."/>
            <person name="Superti-Furga G."/>
            <person name="Colinge J."/>
        </authorList>
    </citation>
    <scope>IDENTIFICATION BY MASS SPECTROMETRY [LARGE SCALE ANALYSIS]</scope>
</reference>
<reference key="22">
    <citation type="journal article" date="2011" name="Nat. Cell Biol.">
        <title>Control of PKA stability and signalling by the RING ligase praja2.</title>
        <authorList>
            <person name="Lignitto L."/>
            <person name="Carlucci A."/>
            <person name="Sepe M."/>
            <person name="Stefan E."/>
            <person name="Cuomo O."/>
            <person name="Nistico R."/>
            <person name="Scorziello A."/>
            <person name="Savoia C."/>
            <person name="Garbi C."/>
            <person name="Annunziato L."/>
            <person name="Feliciello A."/>
        </authorList>
    </citation>
    <scope>SUBCELLULAR LOCATION</scope>
    <scope>INTERACTION WITH PJA2</scope>
</reference>
<reference key="23">
    <citation type="journal article" date="2011" name="Sci. Signal.">
        <title>System-wide temporal characterization of the proteome and phosphoproteome of human embryonic stem cell differentiation.</title>
        <authorList>
            <person name="Rigbolt K.T."/>
            <person name="Prokhorova T.A."/>
            <person name="Akimov V."/>
            <person name="Henningsen J."/>
            <person name="Johansen P.T."/>
            <person name="Kratchmarova I."/>
            <person name="Kassem M."/>
            <person name="Mann M."/>
            <person name="Olsen J.V."/>
            <person name="Blagoev B."/>
        </authorList>
    </citation>
    <scope>PHOSPHORYLATION [LARGE SCALE ANALYSIS] AT SER-78 AND SER-80</scope>
    <scope>IDENTIFICATION BY MASS SPECTROMETRY [LARGE SCALE ANALYSIS]</scope>
</reference>
<reference key="24">
    <citation type="journal article" date="2012" name="J. Cell Sci.">
        <title>A key phosphorylation site in AC8 mediates regulation of Ca(2+)-dependent cAMP dynamics by an AC8-AKAP79-PKA signalling complex.</title>
        <authorList>
            <person name="Willoughby D."/>
            <person name="Halls M.L."/>
            <person name="Everett K.L."/>
            <person name="Ciruela A."/>
            <person name="Skroblin P."/>
            <person name="Klussmann E."/>
            <person name="Cooper D.M."/>
        </authorList>
    </citation>
    <scope>INTERACTION WITH ADCY8</scope>
</reference>
<reference key="25">
    <citation type="journal article" date="2012" name="Mol. Cell. Proteomics">
        <title>Comparative large-scale characterisation of plant vs. mammal proteins reveals similar and idiosyncratic N-alpha acetylation features.</title>
        <authorList>
            <person name="Bienvenut W.V."/>
            <person name="Sumpton D."/>
            <person name="Martinez A."/>
            <person name="Lilla S."/>
            <person name="Espagne C."/>
            <person name="Meinnel T."/>
            <person name="Giglione C."/>
        </authorList>
    </citation>
    <scope>ACETYLATION [LARGE SCALE ANALYSIS] AT SER-2</scope>
    <scope>CLEAVAGE OF INITIATOR METHIONINE [LARGE SCALE ANALYSIS]</scope>
    <scope>IDENTIFICATION BY MASS SPECTROMETRY [LARGE SCALE ANALYSIS]</scope>
</reference>
<reference key="26">
    <citation type="journal article" date="2013" name="J. Proteome Res.">
        <title>Toward a comprehensive characterization of a human cancer cell phosphoproteome.</title>
        <authorList>
            <person name="Zhou H."/>
            <person name="Di Palma S."/>
            <person name="Preisinger C."/>
            <person name="Peng M."/>
            <person name="Polat A.N."/>
            <person name="Heck A.J."/>
            <person name="Mohammed S."/>
        </authorList>
    </citation>
    <scope>PHOSPHORYLATION [LARGE SCALE ANALYSIS] AT THR-54; SER-58; SER-78; SER-80; SER-99 AND SER-395</scope>
    <scope>IDENTIFICATION BY MASS SPECTROMETRY [LARGE SCALE ANALYSIS]</scope>
    <source>
        <tissue>Cervix carcinoma</tissue>
        <tissue>Erythroleukemia</tissue>
    </source>
</reference>
<reference key="27">
    <citation type="journal article" date="2014" name="J. Proteomics">
        <title>An enzyme assisted RP-RPLC approach for in-depth analysis of human liver phosphoproteome.</title>
        <authorList>
            <person name="Bian Y."/>
            <person name="Song C."/>
            <person name="Cheng K."/>
            <person name="Dong M."/>
            <person name="Wang F."/>
            <person name="Huang J."/>
            <person name="Sun D."/>
            <person name="Wang L."/>
            <person name="Ye M."/>
            <person name="Zou H."/>
        </authorList>
    </citation>
    <scope>PHOSPHORYLATION [LARGE SCALE ANALYSIS] AT THR-54; SER-58; SER-78; SER-80 AND SER-350</scope>
    <scope>IDENTIFICATION BY MASS SPECTROMETRY [LARGE SCALE ANALYSIS]</scope>
    <source>
        <tissue>Liver</tissue>
    </source>
</reference>
<reference key="28">
    <citation type="journal article" date="2015" name="Proteomics">
        <title>N-terminome analysis of the human mitochondrial proteome.</title>
        <authorList>
            <person name="Vaca Jacome A.S."/>
            <person name="Rabilloud T."/>
            <person name="Schaeffer-Reiss C."/>
            <person name="Rompais M."/>
            <person name="Ayoub D."/>
            <person name="Lane L."/>
            <person name="Bairoch A."/>
            <person name="Van Dorsselaer A."/>
            <person name="Carapito C."/>
        </authorList>
    </citation>
    <scope>ACETYLATION [LARGE SCALE ANALYSIS] AT SER-2</scope>
    <scope>CLEAVAGE OF INITIATOR METHIONINE [LARGE SCALE ANALYSIS]</scope>
    <scope>IDENTIFICATION BY MASS SPECTROMETRY [LARGE SCALE ANALYSIS]</scope>
</reference>
<reference key="29">
    <citation type="journal article" date="2016" name="J. Biol. Chem.">
        <title>The A-Kinase Anchoring Protein (AKAP) Glycogen Synthase Kinase 3beta Interaction Protein (GSKIP) Regulates beta-Catenin through Its Interactions with Both Protein Kinase A (PKA) and GSK3beta.</title>
        <authorList>
            <person name="Dema A."/>
            <person name="Schroeter M.F."/>
            <person name="Perets E."/>
            <person name="Skroblin P."/>
            <person name="Moutty M.C."/>
            <person name="Deak V.A."/>
            <person name="Birchmeier W."/>
            <person name="Klussmann E."/>
        </authorList>
    </citation>
    <scope>INTERACTION WITH GSKIP</scope>
    <scope>COMPLEX FORMATION WITH GSKIP AND GSK3B</scope>
</reference>
<protein>
    <recommendedName>
        <fullName>cAMP-dependent protein kinase type II-alpha regulatory subunit</fullName>
    </recommendedName>
</protein>
<gene>
    <name type="primary">PRKAR2A</name>
    <name type="synonym">PKR2</name>
    <name type="synonym">PRKAR2</name>
</gene>
<feature type="initiator methionine" description="Removed" evidence="16 19">
    <location>
        <position position="1"/>
    </location>
</feature>
<feature type="chain" id="PRO_0000205385" description="cAMP-dependent protein kinase type II-alpha regulatory subunit">
    <location>
        <begin position="2"/>
        <end position="404"/>
    </location>
</feature>
<feature type="region of interest" description="Dimerization and phosphorylation">
    <location>
        <begin position="2"/>
        <end position="138"/>
    </location>
</feature>
<feature type="region of interest" description="Disordered" evidence="3">
    <location>
        <begin position="47"/>
        <end position="90"/>
    </location>
</feature>
<feature type="compositionally biased region" description="Basic and acidic residues" evidence="3">
    <location>
        <begin position="67"/>
        <end position="78"/>
    </location>
</feature>
<feature type="binding site">
    <location>
        <begin position="139"/>
        <end position="260"/>
    </location>
    <ligand>
        <name>3',5'-cyclic AMP</name>
        <dbReference type="ChEBI" id="CHEBI:58165"/>
        <label>1</label>
    </ligand>
</feature>
<feature type="binding site">
    <location>
        <position position="208"/>
    </location>
    <ligand>
        <name>3',5'-cyclic AMP</name>
        <dbReference type="ChEBI" id="CHEBI:58165"/>
        <label>1</label>
    </ligand>
</feature>
<feature type="binding site">
    <location>
        <position position="217"/>
    </location>
    <ligand>
        <name>3',5'-cyclic AMP</name>
        <dbReference type="ChEBI" id="CHEBI:58165"/>
        <label>1</label>
    </ligand>
</feature>
<feature type="binding site">
    <location>
        <begin position="261"/>
        <end position="404"/>
    </location>
    <ligand>
        <name>3',5'-cyclic AMP</name>
        <dbReference type="ChEBI" id="CHEBI:58165"/>
        <label>2</label>
    </ligand>
</feature>
<feature type="binding site">
    <location>
        <position position="338"/>
    </location>
    <ligand>
        <name>3',5'-cyclic AMP</name>
        <dbReference type="ChEBI" id="CHEBI:58165"/>
        <label>2</label>
    </ligand>
</feature>
<feature type="binding site">
    <location>
        <position position="347"/>
    </location>
    <ligand>
        <name>3',5'-cyclic AMP</name>
        <dbReference type="ChEBI" id="CHEBI:58165"/>
        <label>2</label>
    </ligand>
</feature>
<feature type="modified residue" description="N-acetylserine" evidence="16 19">
    <location>
        <position position="2"/>
    </location>
</feature>
<feature type="modified residue" description="Phosphoserine" evidence="14">
    <location>
        <position position="48"/>
    </location>
</feature>
<feature type="modified residue" description="Phosphothreonine" evidence="12 14 17 18">
    <location>
        <position position="54"/>
    </location>
</feature>
<feature type="modified residue" description="Phosphoserine" evidence="12 14 17 18">
    <location>
        <position position="58"/>
    </location>
</feature>
<feature type="modified residue" description="Phosphoserine" evidence="12 13 14 15 17 18">
    <location>
        <position position="78"/>
    </location>
</feature>
<feature type="modified residue" description="Phosphoserine" evidence="12 13 14 15 17 18">
    <location>
        <position position="80"/>
    </location>
</feature>
<feature type="modified residue" description="Phosphoserine; by PKA" evidence="10 11 12 13 17">
    <location>
        <position position="99"/>
    </location>
</feature>
<feature type="modified residue" description="Phosphothreonine; by PDPK1" evidence="2">
    <location>
        <position position="215"/>
    </location>
</feature>
<feature type="modified residue" description="Phosphoserine" evidence="18">
    <location>
        <position position="350"/>
    </location>
</feature>
<feature type="modified residue" description="Phosphoserine" evidence="17">
    <location>
        <position position="395"/>
    </location>
</feature>
<feature type="splice variant" id="VSP_056821" description="In isoform 2." evidence="7 8">
    <location>
        <begin position="292"/>
        <end position="313"/>
    </location>
</feature>
<feature type="helix" evidence="20">
    <location>
        <begin position="10"/>
        <end position="24"/>
    </location>
</feature>
<feature type="helix" evidence="20">
    <location>
        <begin position="29"/>
        <end position="43"/>
    </location>
</feature>
<keyword id="KW-0002">3D-structure</keyword>
<keyword id="KW-0007">Acetylation</keyword>
<keyword id="KW-0025">Alternative splicing</keyword>
<keyword id="KW-0114">cAMP</keyword>
<keyword id="KW-0116">cAMP-binding</keyword>
<keyword id="KW-1003">Cell membrane</keyword>
<keyword id="KW-0963">Cytoplasm</keyword>
<keyword id="KW-0472">Membrane</keyword>
<keyword id="KW-0547">Nucleotide-binding</keyword>
<keyword id="KW-0597">Phosphoprotein</keyword>
<keyword id="KW-1267">Proteomics identification</keyword>
<keyword id="KW-1185">Reference proteome</keyword>
<keyword id="KW-0677">Repeat</keyword>
<comment type="function">
    <text>Regulatory subunit of the cAMP-dependent protein kinases involved in cAMP signaling in cells. Type II regulatory chains mediate membrane association by binding to anchoring proteins, including the MAP2 kinase.</text>
</comment>
<comment type="subunit">
    <text evidence="1 5 6">The inactive form of the enzyme is composed of two regulatory chains and two catalytic chains. Activation by cAMP produces two active catalytic monomers and a regulatory dimer that binds four cAMP molecules. Interacts with AKAP4 and CBFA2T3. Interacts with the phosphorylated form of PJA2. Interacts with MYRIP. This interaction may link PKA to components of the exocytosis machinery, thus facilitating exocytosis, including insulin release (By similarity). Forms a complex composed of PRKAR2A, GSK3B and GSKIP through GSKIP interaction; facilitates PKA-induced phosphorylation and regulates GSK3B activity (PubMed:27484798). Interacts with ADCY8; inhibits adenylate cyclase activity through PKA phosphorylation (PubMed:22976297).</text>
</comment>
<comment type="interaction">
    <interactant intactId="EBI-2556122">
        <id>P13861</id>
    </interactant>
    <interactant intactId="EBI-2119593">
        <id>Q92667</id>
        <label>AKAP1</label>
    </interactant>
    <organismsDiffer>false</organismsDiffer>
    <experiments>8</experiments>
</comment>
<comment type="interaction">
    <interactant intactId="EBI-2556122">
        <id>P13861</id>
    </interactant>
    <interactant intactId="EBI-2562430">
        <id>Q02952</id>
        <label>AKAP12</label>
    </interactant>
    <organismsDiffer>false</organismsDiffer>
    <experiments>2</experiments>
</comment>
<comment type="interaction">
    <interactant intactId="EBI-2556122">
        <id>P13861</id>
    </interactant>
    <interactant intactId="EBI-9033101">
        <id>O75969</id>
        <label>AKAP3</label>
    </interactant>
    <organismsDiffer>false</organismsDiffer>
    <experiments>2</experiments>
</comment>
<comment type="interaction">
    <interactant intactId="EBI-2556122">
        <id>P13861</id>
    </interactant>
    <interactant intactId="EBI-703640">
        <id>P24588</id>
        <label>AKAP5</label>
    </interactant>
    <organismsDiffer>false</organismsDiffer>
    <experiments>5</experiments>
</comment>
<comment type="interaction">
    <interactant intactId="EBI-2556122">
        <id>P13861</id>
    </interactant>
    <interactant intactId="EBI-1237481">
        <id>O43823</id>
        <label>AKAP8</label>
    </interactant>
    <organismsDiffer>false</organismsDiffer>
    <experiments>3</experiments>
</comment>
<comment type="interaction">
    <interactant intactId="EBI-2556122">
        <id>P13861</id>
    </interactant>
    <interactant intactId="EBI-7225021">
        <id>P03259-2</id>
    </interactant>
    <organismsDiffer>true</organismsDiffer>
    <experiments>5</experiments>
</comment>
<comment type="interaction">
    <interactant intactId="EBI-11752137">
        <id>P13861-2</id>
    </interactant>
    <interactant intactId="EBI-2119626">
        <id>Q86UN6</id>
        <label>AKAP14</label>
    </interactant>
    <organismsDiffer>false</organismsDiffer>
    <experiments>3</experiments>
</comment>
<comment type="interaction">
    <interactant intactId="EBI-11752137">
        <id>P13861-2</id>
    </interactant>
    <interactant intactId="EBI-10185182">
        <id>O43687-2</id>
        <label>AKAP7</label>
    </interactant>
    <organismsDiffer>false</organismsDiffer>
    <experiments>5</experiments>
</comment>
<comment type="interaction">
    <interactant intactId="EBI-11752137">
        <id>P13861-2</id>
    </interactant>
    <interactant intactId="EBI-473196">
        <id>Q5T3J3</id>
        <label>LRIF1</label>
    </interactant>
    <organismsDiffer>false</organismsDiffer>
    <experiments>3</experiments>
</comment>
<comment type="subcellular location">
    <subcellularLocation>
        <location evidence="4">Cytoplasm</location>
    </subcellularLocation>
    <subcellularLocation>
        <location evidence="4">Cell membrane</location>
    </subcellularLocation>
    <text>Colocalizes with PJA2 in the cytoplasm and the cell membrane.</text>
</comment>
<comment type="alternative products">
    <event type="alternative splicing"/>
    <isoform>
        <id>P13861-1</id>
        <name>1</name>
        <sequence type="displayed"/>
    </isoform>
    <isoform>
        <id>P13861-2</id>
        <name>2</name>
        <sequence type="described" ref="VSP_056821"/>
    </isoform>
</comment>
<comment type="tissue specificity">
    <text>Four types of regulatory chains are found: I-alpha, I-beta, II-alpha, and II-beta. Their expression varies among tissues and is in some cases constitutive and in others inducible.</text>
</comment>
<comment type="PTM">
    <text>Phosphorylated by the activated catalytic chain.</text>
</comment>
<comment type="similarity">
    <text evidence="9">Belongs to the cAMP-dependent kinase regulatory chain family.</text>
</comment>
<accession>P13861</accession>
<accession>Q16823</accession>
<accession>Q9BUB1</accession>
<sequence>MSHIQIPPGLTELLQGYTVEVLRQQPPDLVEFAVEYFTRLREARAPASVLPAATPRQSLGHPPPEPGPDRVADAKGDSESEEDEDLEVPVPSRFNRRVSVCAETYNPDEEEEDTDPRVIHPKTDEQRCRLQEACKDILLFKNLDQEQLSQVLDAMFERIVKADEHVIDQGDDGDNFYVIERGTYDILVTKDNQTRSVGQYDNRGSFGELALMYNTPRAATIVATSEGSLWGLDRVTFRRIIVKNNAKKRKMFESFIESVPLLKSLEVSERMKIVDVIGEKIYKDGERIITQGEKADSFYIIESGEVSILIRSRTKSNKDGGNQEVEIARCHKGQYFGELALVTNKPRAASAYAVGDVKCLVMDVQAFERLLGPCMDIMKRNISHYEEQLVKMFGSSVDLGNLGQ</sequence>
<organism>
    <name type="scientific">Homo sapiens</name>
    <name type="common">Human</name>
    <dbReference type="NCBI Taxonomy" id="9606"/>
    <lineage>
        <taxon>Eukaryota</taxon>
        <taxon>Metazoa</taxon>
        <taxon>Chordata</taxon>
        <taxon>Craniata</taxon>
        <taxon>Vertebrata</taxon>
        <taxon>Euteleostomi</taxon>
        <taxon>Mammalia</taxon>
        <taxon>Eutheria</taxon>
        <taxon>Euarchontoglires</taxon>
        <taxon>Primates</taxon>
        <taxon>Haplorrhini</taxon>
        <taxon>Catarrhini</taxon>
        <taxon>Hominidae</taxon>
        <taxon>Homo</taxon>
    </lineage>
</organism>
<dbReference type="EMBL" id="X14968">
    <property type="protein sequence ID" value="CAA33094.1"/>
    <property type="molecule type" value="mRNA"/>
</dbReference>
<dbReference type="EMBL" id="BT007225">
    <property type="protein sequence ID" value="AAP35889.1"/>
    <property type="molecule type" value="mRNA"/>
</dbReference>
<dbReference type="EMBL" id="AC141002">
    <property type="status" value="NOT_ANNOTATED_CDS"/>
    <property type="molecule type" value="Genomic_DNA"/>
</dbReference>
<dbReference type="EMBL" id="AC144546">
    <property type="status" value="NOT_ANNOTATED_CDS"/>
    <property type="molecule type" value="Genomic_DNA"/>
</dbReference>
<dbReference type="EMBL" id="CH471055">
    <property type="protein sequence ID" value="EAW64926.1"/>
    <property type="molecule type" value="Genomic_DNA"/>
</dbReference>
<dbReference type="EMBL" id="CH471055">
    <property type="protein sequence ID" value="EAW64927.1"/>
    <property type="molecule type" value="Genomic_DNA"/>
</dbReference>
<dbReference type="EMBL" id="BC002763">
    <property type="protein sequence ID" value="AAH02763.1"/>
    <property type="molecule type" value="mRNA"/>
</dbReference>
<dbReference type="EMBL" id="X99455">
    <property type="protein sequence ID" value="CAA67817.1"/>
    <property type="molecule type" value="Genomic_DNA"/>
</dbReference>
<dbReference type="CCDS" id="CCDS2778.1">
    <molecule id="P13861-1"/>
</dbReference>
<dbReference type="CCDS" id="CCDS82771.1">
    <molecule id="P13861-2"/>
</dbReference>
<dbReference type="PIR" id="S03885">
    <property type="entry name" value="OKHU2R"/>
</dbReference>
<dbReference type="RefSeq" id="NP_001308911.1">
    <molecule id="P13861-1"/>
    <property type="nucleotide sequence ID" value="NM_001321982.2"/>
</dbReference>
<dbReference type="RefSeq" id="NP_001308912.1">
    <molecule id="P13861-2"/>
    <property type="nucleotide sequence ID" value="NM_001321983.2"/>
</dbReference>
<dbReference type="RefSeq" id="NP_004148.1">
    <molecule id="P13861-1"/>
    <property type="nucleotide sequence ID" value="NM_004157.4"/>
</dbReference>
<dbReference type="RefSeq" id="XP_011532244.1">
    <molecule id="P13861-1"/>
    <property type="nucleotide sequence ID" value="XM_011533942.4"/>
</dbReference>
<dbReference type="RefSeq" id="XP_016862304.1">
    <property type="nucleotide sequence ID" value="XM_017006815.1"/>
</dbReference>
<dbReference type="RefSeq" id="XP_047304499.1">
    <molecule id="P13861-2"/>
    <property type="nucleotide sequence ID" value="XM_047448543.1"/>
</dbReference>
<dbReference type="RefSeq" id="XP_054203191.1">
    <molecule id="P13861-1"/>
    <property type="nucleotide sequence ID" value="XM_054347216.1"/>
</dbReference>
<dbReference type="RefSeq" id="XP_054203192.1">
    <molecule id="P13861-2"/>
    <property type="nucleotide sequence ID" value="XM_054347217.1"/>
</dbReference>
<dbReference type="PDB" id="2IZX">
    <property type="method" value="X-ray"/>
    <property type="resolution" value="1.30 A"/>
    <property type="chains" value="A/B=4-44"/>
</dbReference>
<dbReference type="PDB" id="2KYG">
    <property type="method" value="NMR"/>
    <property type="chains" value="A/B=1-45"/>
</dbReference>
<dbReference type="PDB" id="4ZP3">
    <property type="method" value="X-ray"/>
    <property type="resolution" value="2.63 A"/>
    <property type="chains" value="A/B/C/D/E/F/G/H/I/J/K/L=2-44"/>
</dbReference>
<dbReference type="PDB" id="5H78">
    <property type="method" value="X-ray"/>
    <property type="resolution" value="2.00 A"/>
    <property type="chains" value="A/B=5-49"/>
</dbReference>
<dbReference type="PDB" id="5XBY">
    <property type="method" value="X-ray"/>
    <property type="resolution" value="3.25 A"/>
    <property type="chains" value="A/B/C/D=5-44"/>
</dbReference>
<dbReference type="PDB" id="8S8O">
    <property type="method" value="NMR"/>
    <property type="chains" value="A/B=1-48"/>
</dbReference>
<dbReference type="PDBsum" id="2IZX"/>
<dbReference type="PDBsum" id="2KYG"/>
<dbReference type="PDBsum" id="4ZP3"/>
<dbReference type="PDBsum" id="5H78"/>
<dbReference type="PDBsum" id="5XBY"/>
<dbReference type="PDBsum" id="8S8O"/>
<dbReference type="BMRB" id="P13861"/>
<dbReference type="SMR" id="P13861"/>
<dbReference type="BioGRID" id="111562">
    <property type="interactions" value="228"/>
</dbReference>
<dbReference type="CORUM" id="P13861"/>
<dbReference type="DIP" id="DIP-552N"/>
<dbReference type="FunCoup" id="P13861">
    <property type="interactions" value="776"/>
</dbReference>
<dbReference type="IntAct" id="P13861">
    <property type="interactions" value="131"/>
</dbReference>
<dbReference type="MINT" id="P13861"/>
<dbReference type="STRING" id="9606.ENSP00000265563"/>
<dbReference type="BindingDB" id="P13861"/>
<dbReference type="ChEMBL" id="CHEMBL2221"/>
<dbReference type="DrugBank" id="DB05798">
    <property type="generic name" value="GEM-231"/>
</dbReference>
<dbReference type="GuidetoPHARMACOLOGY" id="1474"/>
<dbReference type="GlyGen" id="P13861">
    <property type="glycosylation" value="1 site, 1 O-linked glycan (1 site)"/>
</dbReference>
<dbReference type="iPTMnet" id="P13861"/>
<dbReference type="PhosphoSitePlus" id="P13861"/>
<dbReference type="SwissPalm" id="P13861"/>
<dbReference type="BioMuta" id="PRKAR2A"/>
<dbReference type="DMDM" id="125198"/>
<dbReference type="OGP" id="P13861"/>
<dbReference type="jPOST" id="P13861"/>
<dbReference type="MassIVE" id="P13861"/>
<dbReference type="PaxDb" id="9606-ENSP00000265563"/>
<dbReference type="PeptideAtlas" id="P13861"/>
<dbReference type="ProteomicsDB" id="52996">
    <molecule id="P13861-1"/>
</dbReference>
<dbReference type="ProteomicsDB" id="79069"/>
<dbReference type="Pumba" id="P13861"/>
<dbReference type="Antibodypedia" id="3555">
    <property type="antibodies" value="493 antibodies from 35 providers"/>
</dbReference>
<dbReference type="DNASU" id="5576"/>
<dbReference type="Ensembl" id="ENST00000265563.13">
    <molecule id="P13861-1"/>
    <property type="protein sequence ID" value="ENSP00000265563.8"/>
    <property type="gene ID" value="ENSG00000114302.17"/>
</dbReference>
<dbReference type="Ensembl" id="ENST00000296446.12">
    <molecule id="P13861-2"/>
    <property type="protein sequence ID" value="ENSP00000296446.8"/>
    <property type="gene ID" value="ENSG00000114302.17"/>
</dbReference>
<dbReference type="Ensembl" id="ENST00000454963.5">
    <molecule id="P13861-1"/>
    <property type="protein sequence ID" value="ENSP00000394041.1"/>
    <property type="gene ID" value="ENSG00000114302.17"/>
</dbReference>
<dbReference type="Ensembl" id="ENST00000706574.1">
    <molecule id="P13861-1"/>
    <property type="protein sequence ID" value="ENSP00000516459.1"/>
    <property type="gene ID" value="ENSG00000114302.17"/>
</dbReference>
<dbReference type="GeneID" id="5576"/>
<dbReference type="KEGG" id="hsa:5576"/>
<dbReference type="MANE-Select" id="ENST00000265563.13">
    <property type="protein sequence ID" value="ENSP00000265563.8"/>
    <property type="RefSeq nucleotide sequence ID" value="NM_004157.4"/>
    <property type="RefSeq protein sequence ID" value="NP_004148.1"/>
</dbReference>
<dbReference type="UCSC" id="uc003cux.2">
    <molecule id="P13861-1"/>
    <property type="organism name" value="human"/>
</dbReference>
<dbReference type="AGR" id="HGNC:9391"/>
<dbReference type="CTD" id="5576"/>
<dbReference type="DisGeNET" id="5576"/>
<dbReference type="GeneCards" id="PRKAR2A"/>
<dbReference type="HGNC" id="HGNC:9391">
    <property type="gene designation" value="PRKAR2A"/>
</dbReference>
<dbReference type="HPA" id="ENSG00000114302">
    <property type="expression patterns" value="Tissue enhanced (skeletal muscle, testis)"/>
</dbReference>
<dbReference type="MIM" id="176910">
    <property type="type" value="gene"/>
</dbReference>
<dbReference type="neXtProt" id="NX_P13861"/>
<dbReference type="OpenTargets" id="ENSG00000114302"/>
<dbReference type="PharmGKB" id="PA33757"/>
<dbReference type="VEuPathDB" id="HostDB:ENSG00000114302"/>
<dbReference type="eggNOG" id="KOG1113">
    <property type="taxonomic scope" value="Eukaryota"/>
</dbReference>
<dbReference type="GeneTree" id="ENSGT00940000154836"/>
<dbReference type="HOGENOM" id="CLU_018310_2_0_1"/>
<dbReference type="InParanoid" id="P13861"/>
<dbReference type="OMA" id="SQTRCVG"/>
<dbReference type="OrthoDB" id="417078at2759"/>
<dbReference type="PAN-GO" id="P13861">
    <property type="GO annotations" value="6 GO annotations based on evolutionary models"/>
</dbReference>
<dbReference type="PhylomeDB" id="P13861"/>
<dbReference type="TreeFam" id="TF314920"/>
<dbReference type="PathwayCommons" id="P13861"/>
<dbReference type="Reactome" id="R-HSA-163615">
    <property type="pathway name" value="PKA activation"/>
</dbReference>
<dbReference type="Reactome" id="R-HSA-164378">
    <property type="pathway name" value="PKA activation in glucagon signalling"/>
</dbReference>
<dbReference type="Reactome" id="R-HSA-180024">
    <property type="pathway name" value="DARPP-32 events"/>
</dbReference>
<dbReference type="Reactome" id="R-HSA-381676">
    <property type="pathway name" value="Glucagon-like Peptide-1 (GLP1) regulates insulin secretion"/>
</dbReference>
<dbReference type="Reactome" id="R-HSA-432040">
    <property type="pathway name" value="Vasopressin regulates renal water homeostasis via Aquaporins"/>
</dbReference>
<dbReference type="Reactome" id="R-HSA-442720">
    <property type="pathway name" value="CREB1 phosphorylation through the activation of Adenylate Cyclase"/>
</dbReference>
<dbReference type="Reactome" id="R-HSA-5610787">
    <property type="pathway name" value="Hedgehog 'off' state"/>
</dbReference>
<dbReference type="Reactome" id="R-HSA-9010642">
    <property type="pathway name" value="ROBO receptors bind AKAP5"/>
</dbReference>
<dbReference type="Reactome" id="R-HSA-9634597">
    <property type="pathway name" value="GPER1 signaling"/>
</dbReference>
<dbReference type="Reactome" id="R-HSA-9660821">
    <property type="pathway name" value="ADORA2B mediated anti-inflammatory cytokines production"/>
</dbReference>
<dbReference type="Reactome" id="R-HSA-9664323">
    <property type="pathway name" value="FCGR3A-mediated IL10 synthesis"/>
</dbReference>
<dbReference type="Reactome" id="R-HSA-983231">
    <property type="pathway name" value="Factors involved in megakaryocyte development and platelet production"/>
</dbReference>
<dbReference type="Reactome" id="R-HSA-9856530">
    <property type="pathway name" value="High laminar flow shear stress activates signaling by PIEZO1 and PECAM1:CDH5:KDR in endothelial cells"/>
</dbReference>
<dbReference type="SignaLink" id="P13861"/>
<dbReference type="SIGNOR" id="P13861"/>
<dbReference type="BioGRID-ORCS" id="5576">
    <property type="hits" value="42 hits in 1166 CRISPR screens"/>
</dbReference>
<dbReference type="CD-CODE" id="8C2F96ED">
    <property type="entry name" value="Centrosome"/>
</dbReference>
<dbReference type="CD-CODE" id="FB4E32DD">
    <property type="entry name" value="Presynaptic clusters and postsynaptic densities"/>
</dbReference>
<dbReference type="ChiTaRS" id="PRKAR2A">
    <property type="organism name" value="human"/>
</dbReference>
<dbReference type="EvolutionaryTrace" id="P13861"/>
<dbReference type="GeneWiki" id="PRKAR2A"/>
<dbReference type="GenomeRNAi" id="5576"/>
<dbReference type="Pharos" id="P13861">
    <property type="development level" value="Tchem"/>
</dbReference>
<dbReference type="PRO" id="PR:P13861"/>
<dbReference type="Proteomes" id="UP000005640">
    <property type="component" value="Chromosome 3"/>
</dbReference>
<dbReference type="RNAct" id="P13861">
    <property type="molecule type" value="protein"/>
</dbReference>
<dbReference type="Bgee" id="ENSG00000114302">
    <property type="expression patterns" value="Expressed in buccal mucosa cell and 207 other cell types or tissues"/>
</dbReference>
<dbReference type="ExpressionAtlas" id="P13861">
    <property type="expression patterns" value="baseline and differential"/>
</dbReference>
<dbReference type="GO" id="GO:0005952">
    <property type="term" value="C:cAMP-dependent protein kinase complex"/>
    <property type="evidence" value="ECO:0000314"/>
    <property type="project" value="UniProtKB"/>
</dbReference>
<dbReference type="GO" id="GO:0005813">
    <property type="term" value="C:centrosome"/>
    <property type="evidence" value="ECO:0000314"/>
    <property type="project" value="UniProtKB"/>
</dbReference>
<dbReference type="GO" id="GO:0097546">
    <property type="term" value="C:ciliary base"/>
    <property type="evidence" value="ECO:0000304"/>
    <property type="project" value="Reactome"/>
</dbReference>
<dbReference type="GO" id="GO:0005737">
    <property type="term" value="C:cytoplasm"/>
    <property type="evidence" value="ECO:0000314"/>
    <property type="project" value="UniProtKB"/>
</dbReference>
<dbReference type="GO" id="GO:0005829">
    <property type="term" value="C:cytosol"/>
    <property type="evidence" value="ECO:0000318"/>
    <property type="project" value="GO_Central"/>
</dbReference>
<dbReference type="GO" id="GO:0070062">
    <property type="term" value="C:extracellular exosome"/>
    <property type="evidence" value="ECO:0007005"/>
    <property type="project" value="UniProtKB"/>
</dbReference>
<dbReference type="GO" id="GO:0005925">
    <property type="term" value="C:focal adhesion"/>
    <property type="evidence" value="ECO:0007005"/>
    <property type="project" value="UniProtKB"/>
</dbReference>
<dbReference type="GO" id="GO:0016020">
    <property type="term" value="C:membrane"/>
    <property type="evidence" value="ECO:0007005"/>
    <property type="project" value="UniProtKB"/>
</dbReference>
<dbReference type="GO" id="GO:0031588">
    <property type="term" value="C:nucleotide-activated protein kinase complex"/>
    <property type="evidence" value="ECO:0000314"/>
    <property type="project" value="BHF-UCL"/>
</dbReference>
<dbReference type="GO" id="GO:0005886">
    <property type="term" value="C:plasma membrane"/>
    <property type="evidence" value="ECO:0000314"/>
    <property type="project" value="UniProtKB"/>
</dbReference>
<dbReference type="GO" id="GO:0044853">
    <property type="term" value="C:plasma membrane raft"/>
    <property type="evidence" value="ECO:0000314"/>
    <property type="project" value="UniProtKB"/>
</dbReference>
<dbReference type="GO" id="GO:0032991">
    <property type="term" value="C:protein-containing complex"/>
    <property type="evidence" value="ECO:0000314"/>
    <property type="project" value="UniProtKB"/>
</dbReference>
<dbReference type="GO" id="GO:0030552">
    <property type="term" value="F:cAMP binding"/>
    <property type="evidence" value="ECO:0000318"/>
    <property type="project" value="GO_Central"/>
</dbReference>
<dbReference type="GO" id="GO:0004862">
    <property type="term" value="F:cAMP-dependent protein kinase inhibitor activity"/>
    <property type="evidence" value="ECO:0000314"/>
    <property type="project" value="BHF-UCL"/>
</dbReference>
<dbReference type="GO" id="GO:0008603">
    <property type="term" value="F:cAMP-dependent protein kinase regulator activity"/>
    <property type="evidence" value="ECO:0000314"/>
    <property type="project" value="BHF-UCL"/>
</dbReference>
<dbReference type="GO" id="GO:0019904">
    <property type="term" value="F:protein domain specific binding"/>
    <property type="evidence" value="ECO:0000353"/>
    <property type="project" value="UniProtKB"/>
</dbReference>
<dbReference type="GO" id="GO:0034236">
    <property type="term" value="F:protein kinase A catalytic subunit binding"/>
    <property type="evidence" value="ECO:0000353"/>
    <property type="project" value="UniProtKB"/>
</dbReference>
<dbReference type="GO" id="GO:0031625">
    <property type="term" value="F:ubiquitin protein ligase binding"/>
    <property type="evidence" value="ECO:0000314"/>
    <property type="project" value="UniProtKB"/>
</dbReference>
<dbReference type="GO" id="GO:0007189">
    <property type="term" value="P:adenylate cyclase-activating G protein-coupled receptor signaling pathway"/>
    <property type="evidence" value="ECO:0000318"/>
    <property type="project" value="GO_Central"/>
</dbReference>
<dbReference type="GO" id="GO:0035556">
    <property type="term" value="P:intracellular signal transduction"/>
    <property type="evidence" value="ECO:0000304"/>
    <property type="project" value="ProtInc"/>
</dbReference>
<dbReference type="GO" id="GO:0141162">
    <property type="term" value="P:negative regulation of cAMP/PKA signal transduction"/>
    <property type="evidence" value="ECO:0000314"/>
    <property type="project" value="BHF-UCL"/>
</dbReference>
<dbReference type="CDD" id="cd00038">
    <property type="entry name" value="CAP_ED"/>
    <property type="match status" value="2"/>
</dbReference>
<dbReference type="CDD" id="cd12103">
    <property type="entry name" value="DD_RIIalpha_PKA"/>
    <property type="match status" value="1"/>
</dbReference>
<dbReference type="DisProt" id="DP02333"/>
<dbReference type="FunFam" id="2.60.120.10:FF:000017">
    <property type="entry name" value="cAMP-dependent protein kinase type II regulatory subunit"/>
    <property type="match status" value="1"/>
</dbReference>
<dbReference type="FunFam" id="1.20.890.10:FF:000002">
    <property type="entry name" value="cAMP-dependent protein kinase type II-alpha regulatory subunit"/>
    <property type="match status" value="1"/>
</dbReference>
<dbReference type="FunFam" id="2.60.120.10:FF:000027">
    <property type="entry name" value="Protein kinase cAMP-dependent type II regulatory subunit alpha"/>
    <property type="match status" value="1"/>
</dbReference>
<dbReference type="Gene3D" id="1.20.890.10">
    <property type="entry name" value="cAMP-dependent protein kinase regulatory subunit, dimerization-anchoring domain"/>
    <property type="match status" value="1"/>
</dbReference>
<dbReference type="Gene3D" id="2.60.120.10">
    <property type="entry name" value="Jelly Rolls"/>
    <property type="match status" value="2"/>
</dbReference>
<dbReference type="IDEAL" id="IID00411"/>
<dbReference type="InterPro" id="IPR050503">
    <property type="entry name" value="cAMP-dep_PK_reg_su-like"/>
</dbReference>
<dbReference type="InterPro" id="IPR012198">
    <property type="entry name" value="cAMP_dep_PK_reg_su"/>
</dbReference>
<dbReference type="InterPro" id="IPR003117">
    <property type="entry name" value="cAMP_dep_PK_reg_su_I/II_a/b"/>
</dbReference>
<dbReference type="InterPro" id="IPR018488">
    <property type="entry name" value="cNMP-bd_CS"/>
</dbReference>
<dbReference type="InterPro" id="IPR000595">
    <property type="entry name" value="cNMP-bd_dom"/>
</dbReference>
<dbReference type="InterPro" id="IPR018490">
    <property type="entry name" value="cNMP-bd_dom_sf"/>
</dbReference>
<dbReference type="InterPro" id="IPR014710">
    <property type="entry name" value="RmlC-like_jellyroll"/>
</dbReference>
<dbReference type="PANTHER" id="PTHR11635">
    <property type="entry name" value="CAMP-DEPENDENT PROTEIN KINASE REGULATORY CHAIN"/>
    <property type="match status" value="1"/>
</dbReference>
<dbReference type="PANTHER" id="PTHR11635:SF153">
    <property type="entry name" value="CAMP-DEPENDENT PROTEIN KINASE TYPE II-ALPHA REGULATORY SUBUNIT"/>
    <property type="match status" value="1"/>
</dbReference>
<dbReference type="Pfam" id="PF00027">
    <property type="entry name" value="cNMP_binding"/>
    <property type="match status" value="2"/>
</dbReference>
<dbReference type="Pfam" id="PF02197">
    <property type="entry name" value="RIIa"/>
    <property type="match status" value="1"/>
</dbReference>
<dbReference type="PIRSF" id="PIRSF000548">
    <property type="entry name" value="PK_regulatory"/>
    <property type="match status" value="1"/>
</dbReference>
<dbReference type="PRINTS" id="PR00103">
    <property type="entry name" value="CAMPKINASE"/>
</dbReference>
<dbReference type="SMART" id="SM00100">
    <property type="entry name" value="cNMP"/>
    <property type="match status" value="2"/>
</dbReference>
<dbReference type="SMART" id="SM00394">
    <property type="entry name" value="RIIa"/>
    <property type="match status" value="1"/>
</dbReference>
<dbReference type="SUPFAM" id="SSF51206">
    <property type="entry name" value="cAMP-binding domain-like"/>
    <property type="match status" value="2"/>
</dbReference>
<dbReference type="SUPFAM" id="SSF47391">
    <property type="entry name" value="Dimerization-anchoring domain of cAMP-dependent PK regulatory subunit"/>
    <property type="match status" value="1"/>
</dbReference>
<dbReference type="PROSITE" id="PS00888">
    <property type="entry name" value="CNMP_BINDING_1"/>
    <property type="match status" value="2"/>
</dbReference>
<dbReference type="PROSITE" id="PS00889">
    <property type="entry name" value="CNMP_BINDING_2"/>
    <property type="match status" value="2"/>
</dbReference>
<dbReference type="PROSITE" id="PS50042">
    <property type="entry name" value="CNMP_BINDING_3"/>
    <property type="match status" value="2"/>
</dbReference>